<feature type="chain" id="PRO_0000299182" description="4-coumarate--CoA ligase-like 9">
    <location>
        <begin position="1"/>
        <end position="562"/>
    </location>
</feature>
<feature type="region of interest" description="SBD1" evidence="2">
    <location>
        <begin position="283"/>
        <end position="352"/>
    </location>
</feature>
<feature type="region of interest" description="SBD2" evidence="2">
    <location>
        <begin position="353"/>
        <end position="417"/>
    </location>
</feature>
<feature type="short sequence motif" description="Microbody targeting signal" evidence="3">
    <location>
        <begin position="560"/>
        <end position="562"/>
    </location>
</feature>
<feature type="binding site" evidence="1">
    <location>
        <position position="212"/>
    </location>
    <ligand>
        <name>ATP</name>
        <dbReference type="ChEBI" id="CHEBI:30616"/>
    </ligand>
</feature>
<feature type="binding site" evidence="1">
    <location>
        <position position="213"/>
    </location>
    <ligand>
        <name>ATP</name>
        <dbReference type="ChEBI" id="CHEBI:30616"/>
    </ligand>
</feature>
<feature type="binding site" evidence="1">
    <location>
        <position position="214"/>
    </location>
    <ligand>
        <name>ATP</name>
        <dbReference type="ChEBI" id="CHEBI:30616"/>
    </ligand>
</feature>
<feature type="binding site" evidence="1">
    <location>
        <position position="215"/>
    </location>
    <ligand>
        <name>ATP</name>
        <dbReference type="ChEBI" id="CHEBI:30616"/>
    </ligand>
</feature>
<feature type="binding site" evidence="1">
    <location>
        <position position="216"/>
    </location>
    <ligand>
        <name>ATP</name>
        <dbReference type="ChEBI" id="CHEBI:30616"/>
    </ligand>
</feature>
<feature type="binding site" evidence="1">
    <location>
        <position position="220"/>
    </location>
    <ligand>
        <name>ATP</name>
        <dbReference type="ChEBI" id="CHEBI:30616"/>
    </ligand>
</feature>
<feature type="binding site" evidence="1">
    <location>
        <position position="281"/>
    </location>
    <ligand>
        <name>CoA</name>
        <dbReference type="ChEBI" id="CHEBI:57287"/>
    </ligand>
</feature>
<feature type="binding site" evidence="1">
    <location>
        <position position="352"/>
    </location>
    <ligand>
        <name>ATP</name>
        <dbReference type="ChEBI" id="CHEBI:30616"/>
    </ligand>
</feature>
<feature type="binding site" evidence="1">
    <location>
        <position position="353"/>
    </location>
    <ligand>
        <name>ATP</name>
        <dbReference type="ChEBI" id="CHEBI:30616"/>
    </ligand>
</feature>
<feature type="binding site" evidence="1">
    <location>
        <position position="357"/>
    </location>
    <ligand>
        <name>ATP</name>
        <dbReference type="ChEBI" id="CHEBI:30616"/>
    </ligand>
</feature>
<feature type="binding site" evidence="1">
    <location>
        <position position="438"/>
    </location>
    <ligand>
        <name>ATP</name>
        <dbReference type="ChEBI" id="CHEBI:30616"/>
    </ligand>
</feature>
<feature type="binding site" evidence="1">
    <location>
        <position position="453"/>
    </location>
    <ligand>
        <name>ATP</name>
        <dbReference type="ChEBI" id="CHEBI:30616"/>
    </ligand>
</feature>
<feature type="binding site" evidence="1">
    <location>
        <position position="461"/>
    </location>
    <ligand>
        <name>CoA</name>
        <dbReference type="ChEBI" id="CHEBI:57287"/>
    </ligand>
</feature>
<feature type="binding site" evidence="1">
    <location>
        <position position="462"/>
    </location>
    <ligand>
        <name>CoA</name>
        <dbReference type="ChEBI" id="CHEBI:57287"/>
    </ligand>
</feature>
<feature type="binding site" evidence="1">
    <location>
        <position position="544"/>
    </location>
    <ligand>
        <name>ATP</name>
        <dbReference type="ChEBI" id="CHEBI:30616"/>
    </ligand>
</feature>
<feature type="sequence conflict" description="In Ref. 1; AAP03018." evidence="7" ref="1">
    <original>T</original>
    <variation>A</variation>
    <location>
        <position position="523"/>
    </location>
</feature>
<accession>Q84P23</accession>
<accession>Q9FGW4</accession>
<name>4CLL9_ARATH</name>
<sequence length="562" mass="61278">MLTKTNDSRLIDRSSGFDQRTGIYHSLRPSLSLPPIDQPLSAAEFALSLLLKSSPPATAGKNIEALTYLVNSSSGDNLTYGELLRRVRSLAVSLRERFPSLASRNVAFILSPSSLDIPVLYLALMSIGVVVSPANPIGSESEVSHQVEVSEPVIAFATSQTVKKLQSSSLPLGTVLMDSTEFLSWLNRSDSSSVNPFQVQVNQSDPAAILFSSGTTGRVKGVLLTHRNLIASTAVSHQRTLQDPVNYDRVGLFSLPLFHVFGFMMMIRAISLGETLVLLGRFELEAMFKAVEKYKVTGMPVSPPLIVALVKSELTKKYDLRSLRSLGCGGAPLGKDIAERFKQKFPDVDIVQGYGLTESSGPAASTFGPEEMVKYGSVGRISENMEAKIVDPSTGESLPPGKTGELWLRGPVIMKGYVGNEKASAETVDKEGWLKTGDLCYFDSEDFLYIVDRLKELIKYKAYQVPPVELEQILHSNPDVIDAAVVPFPDEDAGEIPMAFIVRKPGSNLNEAQIIDFVAKQVTPYKKVRRVAFINAIPKNPAGKILRRELTKIAVDGNASKL</sequence>
<keyword id="KW-0067">ATP-binding</keyword>
<keyword id="KW-0275">Fatty acid biosynthesis</keyword>
<keyword id="KW-0276">Fatty acid metabolism</keyword>
<keyword id="KW-0436">Ligase</keyword>
<keyword id="KW-0444">Lipid biosynthesis</keyword>
<keyword id="KW-0443">Lipid metabolism</keyword>
<keyword id="KW-0460">Magnesium</keyword>
<keyword id="KW-0547">Nucleotide-binding</keyword>
<keyword id="KW-0925">Oxylipin biosynthesis</keyword>
<keyword id="KW-0576">Peroxisome</keyword>
<keyword id="KW-1185">Reference proteome</keyword>
<protein>
    <recommendedName>
        <fullName evidence="6">4-coumarate--CoA ligase-like 9</fullName>
        <ecNumber evidence="4 5">6.2.1.-</ecNumber>
    </recommendedName>
    <alternativeName>
        <fullName>4-coumarate--CoA ligase isoform 4</fullName>
        <shortName>At4CL4</shortName>
    </alternativeName>
</protein>
<reference key="1">
    <citation type="journal article" date="2003" name="Plant Physiol.">
        <title>Arabidopsis contains a large superfamily of acyl-activating enzymes. Phylogenetic and biochemical analysis reveals a new class of acyl-coenzyme a synthetases.</title>
        <authorList>
            <person name="Shockey J.M."/>
            <person name="Fulda M.S."/>
            <person name="Browse J."/>
        </authorList>
    </citation>
    <scope>NUCLEOTIDE SEQUENCE [MRNA]</scope>
    <scope>GENE FAMILY ORGANIZATION</scope>
    <source>
        <strain>cv. Wassilewskija</strain>
    </source>
</reference>
<reference key="2">
    <citation type="submission" date="2003-08" db="EMBL/GenBank/DDBJ databases">
        <title>Functional classification of Arabidopsis thaliana 4-coumarate CoA ligase genes.</title>
        <authorList>
            <person name="Lawrence P.K."/>
        </authorList>
    </citation>
    <scope>NUCLEOTIDE SEQUENCE [MRNA]</scope>
</reference>
<reference key="3">
    <citation type="journal article" date="2000" name="DNA Res.">
        <title>Structural analysis of Arabidopsis thaliana chromosome 5. X. Sequence features of the regions of 3,076,755 bp covered by sixty P1 and TAC clones.</title>
        <authorList>
            <person name="Sato S."/>
            <person name="Nakamura Y."/>
            <person name="Kaneko T."/>
            <person name="Katoh T."/>
            <person name="Asamizu E."/>
            <person name="Kotani H."/>
            <person name="Tabata S."/>
        </authorList>
    </citation>
    <scope>NUCLEOTIDE SEQUENCE [LARGE SCALE GENOMIC DNA]</scope>
    <source>
        <strain>cv. Columbia</strain>
    </source>
</reference>
<reference key="4">
    <citation type="journal article" date="1997" name="DNA Res.">
        <title>Structural analysis of Arabidopsis thaliana chromosome 5. III. Sequence features of the regions of 1,191,918 bp covered by seventeen physically assigned P1 clones.</title>
        <authorList>
            <person name="Nakamura Y."/>
            <person name="Sato S."/>
            <person name="Kaneko T."/>
            <person name="Kotani H."/>
            <person name="Asamizu E."/>
            <person name="Miyajima N."/>
            <person name="Tabata S."/>
        </authorList>
    </citation>
    <scope>NUCLEOTIDE SEQUENCE [LARGE SCALE GENOMIC DNA]</scope>
    <source>
        <strain>cv. Columbia</strain>
    </source>
</reference>
<reference key="5">
    <citation type="journal article" date="2017" name="Plant J.">
        <title>Araport11: a complete reannotation of the Arabidopsis thaliana reference genome.</title>
        <authorList>
            <person name="Cheng C.Y."/>
            <person name="Krishnakumar V."/>
            <person name="Chan A.P."/>
            <person name="Thibaud-Nissen F."/>
            <person name="Schobel S."/>
            <person name="Town C.D."/>
        </authorList>
    </citation>
    <scope>GENOME REANNOTATION</scope>
    <source>
        <strain>cv. Columbia</strain>
    </source>
</reference>
<reference key="6">
    <citation type="journal article" date="2003" name="Science">
        <title>Empirical analysis of transcriptional activity in the Arabidopsis genome.</title>
        <authorList>
            <person name="Yamada K."/>
            <person name="Lim J."/>
            <person name="Dale J.M."/>
            <person name="Chen H."/>
            <person name="Shinn P."/>
            <person name="Palm C.J."/>
            <person name="Southwick A.M."/>
            <person name="Wu H.C."/>
            <person name="Kim C.J."/>
            <person name="Nguyen M."/>
            <person name="Pham P.K."/>
            <person name="Cheuk R.F."/>
            <person name="Karlin-Newmann G."/>
            <person name="Liu S.X."/>
            <person name="Lam B."/>
            <person name="Sakano H."/>
            <person name="Wu T."/>
            <person name="Yu G."/>
            <person name="Miranda M."/>
            <person name="Quach H.L."/>
            <person name="Tripp M."/>
            <person name="Chang C.H."/>
            <person name="Lee J.M."/>
            <person name="Toriumi M.J."/>
            <person name="Chan M.M."/>
            <person name="Tang C.C."/>
            <person name="Onodera C.S."/>
            <person name="Deng J.M."/>
            <person name="Akiyama K."/>
            <person name="Ansari Y."/>
            <person name="Arakawa T."/>
            <person name="Banh J."/>
            <person name="Banno F."/>
            <person name="Bowser L."/>
            <person name="Brooks S.Y."/>
            <person name="Carninci P."/>
            <person name="Chao Q."/>
            <person name="Choy N."/>
            <person name="Enju A."/>
            <person name="Goldsmith A.D."/>
            <person name="Gurjal M."/>
            <person name="Hansen N.F."/>
            <person name="Hayashizaki Y."/>
            <person name="Johnson-Hopson C."/>
            <person name="Hsuan V.W."/>
            <person name="Iida K."/>
            <person name="Karnes M."/>
            <person name="Khan S."/>
            <person name="Koesema E."/>
            <person name="Ishida J."/>
            <person name="Jiang P.X."/>
            <person name="Jones T."/>
            <person name="Kawai J."/>
            <person name="Kamiya A."/>
            <person name="Meyers C."/>
            <person name="Nakajima M."/>
            <person name="Narusaka M."/>
            <person name="Seki M."/>
            <person name="Sakurai T."/>
            <person name="Satou M."/>
            <person name="Tamse R."/>
            <person name="Vaysberg M."/>
            <person name="Wallender E.K."/>
            <person name="Wong C."/>
            <person name="Yamamura Y."/>
            <person name="Yuan S."/>
            <person name="Shinozaki K."/>
            <person name="Davis R.W."/>
            <person name="Theologis A."/>
            <person name="Ecker J.R."/>
        </authorList>
    </citation>
    <scope>NUCLEOTIDE SEQUENCE [LARGE SCALE MRNA]</scope>
    <source>
        <strain>cv. Columbia</strain>
    </source>
</reference>
<reference key="7">
    <citation type="journal article" date="2003" name="Proc. Natl. Acad. Sci. U.S.A.">
        <title>The substrate specificity-determining amino acid code of 4-coumarate:CoA ligase.</title>
        <authorList>
            <person name="Schneider K."/>
            <person name="Hoevel K."/>
            <person name="Witzel K."/>
            <person name="Hamberger B."/>
            <person name="Schomburg D."/>
            <person name="Kombrink E."/>
            <person name="Stuible H.-P."/>
        </authorList>
    </citation>
    <scope>GENE FAMILY ORGANIZATION</scope>
</reference>
<reference key="8">
    <citation type="journal article" date="2005" name="J. Biol. Chem.">
        <title>A new type of peroxisomal acyl-coenzyme A synthetase from Arabidopsis thaliana has the catalytic capacity to activate biosynthetic precursors of jasmonic acid.</title>
        <authorList>
            <person name="Schneider K."/>
            <person name="Kienow L."/>
            <person name="Schmelzer E."/>
            <person name="Colby T."/>
            <person name="Bartsch M."/>
            <person name="Miersch O."/>
            <person name="Wasternack C."/>
            <person name="Kombrink E."/>
            <person name="Stuible H.-P."/>
        </authorList>
    </citation>
    <scope>FUNCTION</scope>
    <scope>SUBCELLULAR LOCATION</scope>
    <scope>ENZYME ACTIVITY</scope>
    <scope>BIOPHYSICOCHEMICAL PROPERTIES</scope>
</reference>
<reference key="9">
    <citation type="journal article" date="2008" name="J. Exp. Bot.">
        <title>Jasmonates meet fatty acids: functional analysis of a new acyl-coenzyme A synthetase family from Arabidopsis thaliana.</title>
        <authorList>
            <person name="Kienow L."/>
            <person name="Schneider K."/>
            <person name="Bartsch M."/>
            <person name="Stuible H.-P."/>
            <person name="Weng H."/>
            <person name="Miersch O."/>
            <person name="Wasternack C."/>
            <person name="Kombrink E."/>
        </authorList>
    </citation>
    <scope>FUNCTION</scope>
    <scope>DISRUPTION PHENOTYPE</scope>
    <scope>CATALYTIC ACTIVITY</scope>
    <scope>BIOPHYSICOCHEMICAL PROPERTIES</scope>
    <scope>TISSUE SPECIFICITY</scope>
</reference>
<dbReference type="EC" id="6.2.1.-" evidence="4 5"/>
<dbReference type="EMBL" id="AY250835">
    <property type="protein sequence ID" value="AAP03018.1"/>
    <property type="molecule type" value="mRNA"/>
</dbReference>
<dbReference type="EMBL" id="AY376731">
    <property type="protein sequence ID" value="AAQ86590.1"/>
    <property type="molecule type" value="mRNA"/>
</dbReference>
<dbReference type="EMBL" id="AB023035">
    <property type="protein sequence ID" value="BAB10742.1"/>
    <property type="molecule type" value="Genomic_DNA"/>
</dbReference>
<dbReference type="EMBL" id="AB007649">
    <property type="protein sequence ID" value="BAB10742.1"/>
    <property type="status" value="JOINED"/>
    <property type="molecule type" value="Genomic_DNA"/>
</dbReference>
<dbReference type="EMBL" id="CP002688">
    <property type="protein sequence ID" value="AED97741.1"/>
    <property type="molecule type" value="Genomic_DNA"/>
</dbReference>
<dbReference type="EMBL" id="AY136459">
    <property type="protein sequence ID" value="AAM97124.1"/>
    <property type="molecule type" value="mRNA"/>
</dbReference>
<dbReference type="EMBL" id="BT010394">
    <property type="protein sequence ID" value="AAQ56837.1"/>
    <property type="molecule type" value="mRNA"/>
</dbReference>
<dbReference type="RefSeq" id="NP_201143.1">
    <property type="nucleotide sequence ID" value="NM_125733.3"/>
</dbReference>
<dbReference type="SMR" id="Q84P23"/>
<dbReference type="FunCoup" id="Q84P23">
    <property type="interactions" value="1010"/>
</dbReference>
<dbReference type="STRING" id="3702.Q84P23"/>
<dbReference type="SwissLipids" id="SLP:000001792"/>
<dbReference type="iPTMnet" id="Q84P23"/>
<dbReference type="PaxDb" id="3702-AT5G63380.1"/>
<dbReference type="ProteomicsDB" id="245107"/>
<dbReference type="EnsemblPlants" id="AT5G63380.1">
    <property type="protein sequence ID" value="AT5G63380.1"/>
    <property type="gene ID" value="AT5G63380"/>
</dbReference>
<dbReference type="GeneID" id="836457"/>
<dbReference type="Gramene" id="AT5G63380.1">
    <property type="protein sequence ID" value="AT5G63380.1"/>
    <property type="gene ID" value="AT5G63380"/>
</dbReference>
<dbReference type="KEGG" id="ath:AT5G63380"/>
<dbReference type="Araport" id="AT5G63380"/>
<dbReference type="TAIR" id="AT5G63380"/>
<dbReference type="eggNOG" id="KOG1176">
    <property type="taxonomic scope" value="Eukaryota"/>
</dbReference>
<dbReference type="HOGENOM" id="CLU_000022_59_2_1"/>
<dbReference type="InParanoid" id="Q84P23"/>
<dbReference type="OMA" id="MIGAVIH"/>
<dbReference type="PhylomeDB" id="Q84P23"/>
<dbReference type="BioCyc" id="ARA:AT5G63380-MONOMER"/>
<dbReference type="SABIO-RK" id="Q84P23"/>
<dbReference type="PRO" id="PR:Q84P23"/>
<dbReference type="Proteomes" id="UP000006548">
    <property type="component" value="Chromosome 5"/>
</dbReference>
<dbReference type="ExpressionAtlas" id="Q84P23">
    <property type="expression patterns" value="baseline and differential"/>
</dbReference>
<dbReference type="GO" id="GO:0005777">
    <property type="term" value="C:peroxisome"/>
    <property type="evidence" value="ECO:0000314"/>
    <property type="project" value="TAIR"/>
</dbReference>
<dbReference type="GO" id="GO:0005524">
    <property type="term" value="F:ATP binding"/>
    <property type="evidence" value="ECO:0007669"/>
    <property type="project" value="UniProtKB-KW"/>
</dbReference>
<dbReference type="GO" id="GO:0102391">
    <property type="term" value="F:decanoate-CoA ligase activity"/>
    <property type="evidence" value="ECO:0007669"/>
    <property type="project" value="RHEA"/>
</dbReference>
<dbReference type="GO" id="GO:0004321">
    <property type="term" value="F:fatty-acyl-CoA synthase activity"/>
    <property type="evidence" value="ECO:0000314"/>
    <property type="project" value="TAIR"/>
</dbReference>
<dbReference type="GO" id="GO:0009695">
    <property type="term" value="P:jasmonic acid biosynthetic process"/>
    <property type="evidence" value="ECO:0000314"/>
    <property type="project" value="TAIR"/>
</dbReference>
<dbReference type="GO" id="GO:0031408">
    <property type="term" value="P:oxylipin biosynthetic process"/>
    <property type="evidence" value="ECO:0007669"/>
    <property type="project" value="UniProtKB-KW"/>
</dbReference>
<dbReference type="CDD" id="cd05904">
    <property type="entry name" value="4CL"/>
    <property type="match status" value="1"/>
</dbReference>
<dbReference type="FunFam" id="3.30.300.30:FF:000007">
    <property type="entry name" value="4-coumarate--CoA ligase 2"/>
    <property type="match status" value="1"/>
</dbReference>
<dbReference type="FunFam" id="3.40.50.12780:FF:000003">
    <property type="entry name" value="Long-chain-fatty-acid--CoA ligase FadD"/>
    <property type="match status" value="1"/>
</dbReference>
<dbReference type="Gene3D" id="3.30.300.30">
    <property type="match status" value="1"/>
</dbReference>
<dbReference type="Gene3D" id="3.40.50.12780">
    <property type="entry name" value="N-terminal domain of ligase-like"/>
    <property type="match status" value="1"/>
</dbReference>
<dbReference type="InterPro" id="IPR025110">
    <property type="entry name" value="AMP-bd_C"/>
</dbReference>
<dbReference type="InterPro" id="IPR045851">
    <property type="entry name" value="AMP-bd_C_sf"/>
</dbReference>
<dbReference type="InterPro" id="IPR020845">
    <property type="entry name" value="AMP-binding_CS"/>
</dbReference>
<dbReference type="InterPro" id="IPR000873">
    <property type="entry name" value="AMP-dep_synth/lig_dom"/>
</dbReference>
<dbReference type="InterPro" id="IPR042099">
    <property type="entry name" value="ANL_N_sf"/>
</dbReference>
<dbReference type="PANTHER" id="PTHR24096:SF251">
    <property type="entry name" value="4-COUMARATE--COA LIGASE-LIKE 9"/>
    <property type="match status" value="1"/>
</dbReference>
<dbReference type="PANTHER" id="PTHR24096">
    <property type="entry name" value="LONG-CHAIN-FATTY-ACID--COA LIGASE"/>
    <property type="match status" value="1"/>
</dbReference>
<dbReference type="Pfam" id="PF00501">
    <property type="entry name" value="AMP-binding"/>
    <property type="match status" value="1"/>
</dbReference>
<dbReference type="Pfam" id="PF13193">
    <property type="entry name" value="AMP-binding_C"/>
    <property type="match status" value="1"/>
</dbReference>
<dbReference type="SUPFAM" id="SSF56801">
    <property type="entry name" value="Acetyl-CoA synthetase-like"/>
    <property type="match status" value="1"/>
</dbReference>
<dbReference type="PROSITE" id="PS00455">
    <property type="entry name" value="AMP_BINDING"/>
    <property type="match status" value="1"/>
</dbReference>
<organism>
    <name type="scientific">Arabidopsis thaliana</name>
    <name type="common">Mouse-ear cress</name>
    <dbReference type="NCBI Taxonomy" id="3702"/>
    <lineage>
        <taxon>Eukaryota</taxon>
        <taxon>Viridiplantae</taxon>
        <taxon>Streptophyta</taxon>
        <taxon>Embryophyta</taxon>
        <taxon>Tracheophyta</taxon>
        <taxon>Spermatophyta</taxon>
        <taxon>Magnoliopsida</taxon>
        <taxon>eudicotyledons</taxon>
        <taxon>Gunneridae</taxon>
        <taxon>Pentapetalae</taxon>
        <taxon>rosids</taxon>
        <taxon>malvids</taxon>
        <taxon>Brassicales</taxon>
        <taxon>Brassicaceae</taxon>
        <taxon>Camelineae</taxon>
        <taxon>Arabidopsis</taxon>
    </lineage>
</organism>
<proteinExistence type="evidence at protein level"/>
<gene>
    <name evidence="6" type="primary">4CLL9</name>
    <name evidence="8" type="ordered locus">At5g63380</name>
    <name evidence="9" type="ORF">K9H21.11</name>
    <name evidence="9" type="ORF">K9H21.8</name>
</gene>
<evidence type="ECO:0000250" key="1">
    <source>
        <dbReference type="UniProtKB" id="O24146"/>
    </source>
</evidence>
<evidence type="ECO:0000250" key="2">
    <source>
        <dbReference type="UniProtKB" id="Q42524"/>
    </source>
</evidence>
<evidence type="ECO:0000255" key="3"/>
<evidence type="ECO:0000269" key="4">
    <source>
    </source>
</evidence>
<evidence type="ECO:0000269" key="5">
    <source>
    </source>
</evidence>
<evidence type="ECO:0000303" key="6">
    <source>
    </source>
</evidence>
<evidence type="ECO:0000305" key="7"/>
<evidence type="ECO:0000312" key="8">
    <source>
        <dbReference type="Araport" id="AT5G63380"/>
    </source>
</evidence>
<evidence type="ECO:0000312" key="9">
    <source>
        <dbReference type="EMBL" id="BAB10742.1"/>
    </source>
</evidence>
<comment type="function">
    <text evidence="1 4 5">Contributes to jasmonic acid biosynthesis by initiating the beta-oxidative chain shortening of its precursors (PubMed:15677481, PubMed:18267944). Converts 12-oxo-phytodienoic acid (OPDA) into OPDA-CoA (PubMed:15677481, PubMed:18267944). Follows a two-step reaction mechanism, wherein the carboxylate substrate first undergoes adenylation by ATP, followed by a thioesterification in the presence of CoA to yield the final CoA thioester (By similarity).</text>
</comment>
<comment type="catalytic activity">
    <reaction evidence="5">
        <text>(9S,13S,15Z)-12-oxophyto-10,15-dienoate + ATP + CoA = (10Z,15Z)-12-oxophytodienoyl-CoA + AMP + diphosphate</text>
        <dbReference type="Rhea" id="RHEA:54896"/>
        <dbReference type="ChEBI" id="CHEBI:30616"/>
        <dbReference type="ChEBI" id="CHEBI:33019"/>
        <dbReference type="ChEBI" id="CHEBI:57287"/>
        <dbReference type="ChEBI" id="CHEBI:57411"/>
        <dbReference type="ChEBI" id="CHEBI:138398"/>
        <dbReference type="ChEBI" id="CHEBI:456215"/>
    </reaction>
    <physiologicalReaction direction="left-to-right" evidence="5">
        <dbReference type="Rhea" id="RHEA:54897"/>
    </physiologicalReaction>
</comment>
<comment type="catalytic activity">
    <reaction evidence="5">
        <text>hexadecanoate + ATP + CoA = hexadecanoyl-CoA + AMP + diphosphate</text>
        <dbReference type="Rhea" id="RHEA:30751"/>
        <dbReference type="ChEBI" id="CHEBI:7896"/>
        <dbReference type="ChEBI" id="CHEBI:30616"/>
        <dbReference type="ChEBI" id="CHEBI:33019"/>
        <dbReference type="ChEBI" id="CHEBI:57287"/>
        <dbReference type="ChEBI" id="CHEBI:57379"/>
        <dbReference type="ChEBI" id="CHEBI:456215"/>
    </reaction>
    <physiologicalReaction direction="left-to-right" evidence="5">
        <dbReference type="Rhea" id="RHEA:30752"/>
    </physiologicalReaction>
</comment>
<comment type="catalytic activity">
    <reaction evidence="5">
        <text>(9Z)-octadecenoate + ATP + CoA = (9Z)-octadecenoyl-CoA + AMP + diphosphate</text>
        <dbReference type="Rhea" id="RHEA:33607"/>
        <dbReference type="ChEBI" id="CHEBI:30616"/>
        <dbReference type="ChEBI" id="CHEBI:30823"/>
        <dbReference type="ChEBI" id="CHEBI:33019"/>
        <dbReference type="ChEBI" id="CHEBI:57287"/>
        <dbReference type="ChEBI" id="CHEBI:57387"/>
        <dbReference type="ChEBI" id="CHEBI:456215"/>
    </reaction>
    <physiologicalReaction direction="left-to-right" evidence="5">
        <dbReference type="Rhea" id="RHEA:33608"/>
    </physiologicalReaction>
</comment>
<comment type="catalytic activity">
    <reaction evidence="5">
        <text>octadecanoate + ATP + CoA = octadecanoyl-CoA + AMP + diphosphate</text>
        <dbReference type="Rhea" id="RHEA:33615"/>
        <dbReference type="ChEBI" id="CHEBI:25629"/>
        <dbReference type="ChEBI" id="CHEBI:30616"/>
        <dbReference type="ChEBI" id="CHEBI:33019"/>
        <dbReference type="ChEBI" id="CHEBI:57287"/>
        <dbReference type="ChEBI" id="CHEBI:57394"/>
        <dbReference type="ChEBI" id="CHEBI:456215"/>
    </reaction>
    <physiologicalReaction direction="left-to-right" evidence="5">
        <dbReference type="Rhea" id="RHEA:33616"/>
    </physiologicalReaction>
</comment>
<comment type="catalytic activity">
    <reaction evidence="5">
        <text>tetradecanoate + ATP + CoA = tetradecanoyl-CoA + AMP + diphosphate</text>
        <dbReference type="Rhea" id="RHEA:33619"/>
        <dbReference type="ChEBI" id="CHEBI:30616"/>
        <dbReference type="ChEBI" id="CHEBI:30807"/>
        <dbReference type="ChEBI" id="CHEBI:33019"/>
        <dbReference type="ChEBI" id="CHEBI:57287"/>
        <dbReference type="ChEBI" id="CHEBI:57385"/>
        <dbReference type="ChEBI" id="CHEBI:456215"/>
    </reaction>
    <physiologicalReaction direction="left-to-right" evidence="5">
        <dbReference type="Rhea" id="RHEA:33620"/>
    </physiologicalReaction>
</comment>
<comment type="catalytic activity">
    <reaction evidence="5">
        <text>dodecanoate + ATP + CoA = dodecanoyl-CoA + AMP + diphosphate</text>
        <dbReference type="Rhea" id="RHEA:33623"/>
        <dbReference type="ChEBI" id="CHEBI:18262"/>
        <dbReference type="ChEBI" id="CHEBI:30616"/>
        <dbReference type="ChEBI" id="CHEBI:33019"/>
        <dbReference type="ChEBI" id="CHEBI:57287"/>
        <dbReference type="ChEBI" id="CHEBI:57375"/>
        <dbReference type="ChEBI" id="CHEBI:456215"/>
    </reaction>
    <physiologicalReaction direction="left-to-right" evidence="5">
        <dbReference type="Rhea" id="RHEA:33624"/>
    </physiologicalReaction>
</comment>
<comment type="catalytic activity">
    <reaction evidence="5">
        <text>decanoate + ATP + CoA = decanoyl-CoA + AMP + diphosphate</text>
        <dbReference type="Rhea" id="RHEA:33627"/>
        <dbReference type="ChEBI" id="CHEBI:27689"/>
        <dbReference type="ChEBI" id="CHEBI:30616"/>
        <dbReference type="ChEBI" id="CHEBI:33019"/>
        <dbReference type="ChEBI" id="CHEBI:57287"/>
        <dbReference type="ChEBI" id="CHEBI:61430"/>
        <dbReference type="ChEBI" id="CHEBI:456215"/>
    </reaction>
    <physiologicalReaction direction="left-to-right" evidence="5">
        <dbReference type="Rhea" id="RHEA:33628"/>
    </physiologicalReaction>
</comment>
<comment type="catalytic activity">
    <reaction evidence="5">
        <text>octanoate + ATP + CoA = octanoyl-CoA + AMP + diphosphate</text>
        <dbReference type="Rhea" id="RHEA:33631"/>
        <dbReference type="ChEBI" id="CHEBI:25646"/>
        <dbReference type="ChEBI" id="CHEBI:30616"/>
        <dbReference type="ChEBI" id="CHEBI:33019"/>
        <dbReference type="ChEBI" id="CHEBI:57287"/>
        <dbReference type="ChEBI" id="CHEBI:57386"/>
        <dbReference type="ChEBI" id="CHEBI:456215"/>
    </reaction>
    <physiologicalReaction direction="left-to-right" evidence="5">
        <dbReference type="Rhea" id="RHEA:33632"/>
    </physiologicalReaction>
</comment>
<comment type="catalytic activity">
    <reaction evidence="5">
        <text>(9Z,12Z)-octadecadienoate + ATP + CoA = (9Z,12Z)-octadecadienoyl-CoA + AMP + diphosphate</text>
        <dbReference type="Rhea" id="RHEA:33651"/>
        <dbReference type="ChEBI" id="CHEBI:30245"/>
        <dbReference type="ChEBI" id="CHEBI:30616"/>
        <dbReference type="ChEBI" id="CHEBI:33019"/>
        <dbReference type="ChEBI" id="CHEBI:57287"/>
        <dbReference type="ChEBI" id="CHEBI:57383"/>
        <dbReference type="ChEBI" id="CHEBI:456215"/>
    </reaction>
    <physiologicalReaction direction="left-to-right" evidence="5">
        <dbReference type="Rhea" id="RHEA:33652"/>
    </physiologicalReaction>
</comment>
<comment type="catalytic activity">
    <reaction evidence="5">
        <text>(9Z,12Z,15Z)-octadecatrienoate + ATP + CoA = (9Z,12Z,15Z)-octadecatrienoyl-CoA + AMP + diphosphate</text>
        <dbReference type="Rhea" id="RHEA:44936"/>
        <dbReference type="ChEBI" id="CHEBI:30616"/>
        <dbReference type="ChEBI" id="CHEBI:32387"/>
        <dbReference type="ChEBI" id="CHEBI:33019"/>
        <dbReference type="ChEBI" id="CHEBI:57287"/>
        <dbReference type="ChEBI" id="CHEBI:74034"/>
        <dbReference type="ChEBI" id="CHEBI:456215"/>
    </reaction>
    <physiologicalReaction direction="left-to-right" evidence="5">
        <dbReference type="Rhea" id="RHEA:44937"/>
    </physiologicalReaction>
</comment>
<comment type="catalytic activity">
    <reaction evidence="5">
        <text>nonanoate + ATP + CoA = nonanoyl-CoA + AMP + diphosphate</text>
        <dbReference type="Rhea" id="RHEA:54952"/>
        <dbReference type="ChEBI" id="CHEBI:30616"/>
        <dbReference type="ChEBI" id="CHEBI:32361"/>
        <dbReference type="ChEBI" id="CHEBI:33019"/>
        <dbReference type="ChEBI" id="CHEBI:57287"/>
        <dbReference type="ChEBI" id="CHEBI:76291"/>
        <dbReference type="ChEBI" id="CHEBI:456215"/>
    </reaction>
    <physiologicalReaction direction="left-to-right" evidence="5">
        <dbReference type="Rhea" id="RHEA:54953"/>
    </physiologicalReaction>
</comment>
<comment type="cofactor">
    <cofactor evidence="1">
        <name>Mg(2+)</name>
        <dbReference type="ChEBI" id="CHEBI:18420"/>
    </cofactor>
</comment>
<comment type="biophysicochemical properties">
    <kinetics>
        <KM evidence="4 5">6302 uM for hexanoate</KM>
        <KM evidence="4 5">2125 uM for nonanoate</KM>
        <KM evidence="4 5">11 uM for OPDA</KM>
        <KM evidence="4 5">35 uM for hexanoate</KM>
        <text evidence="4 5">kcat is 2 sec(-1) with tetradecanoate as substrate (PubMed:15677481, PubMed:18267944). kcat is 2.62 sec(-1) with OPDA as substrate (PubMed:15677481, PubMed:18267944). kcat is 19.87 sec(-1) with nonanoate as substrate (PubMed:15677481, PubMed:18267944). kcat is 2.79 sec(-1) with hexanoate as substrate (PubMed:15677481, PubMed:18267944).</text>
    </kinetics>
</comment>
<comment type="subcellular location">
    <subcellularLocation>
        <location evidence="4">Peroxisome</location>
    </subcellularLocation>
</comment>
<comment type="tissue specificity">
    <text evidence="5">Expressed at low level in leaves.</text>
</comment>
<comment type="domain">
    <text evidence="2">Both substrate-binding domains (SBD1 and SBD2) are involved in the substrate recognition, and are sufficient to confer the substrate specificity.</text>
</comment>
<comment type="disruption phenotype">
    <text evidence="5">No obvious phenotype in growth, root and flower development, fertility, reproduction and morphology.</text>
</comment>
<comment type="similarity">
    <text evidence="7">Belongs to the ATP-dependent AMP-binding enzyme family.</text>
</comment>